<sequence length="173" mass="19665">VVLSKECAKPLATPKVTLNKRGFATTIATKNREMMVWQPFNNKMFETFSFLPPLTDEQISKQVDYILTNSWTPCLEFAASDQAYAGNENCIRMGPVASTYQDNRYWTMWKLPMFGCTDGSQVLSEIQACTKAFPDAYIRLVCFDANRQVQISGFLVHRPPSATDYRLPADRQV</sequence>
<reference key="1">
    <citation type="journal article" date="1989" name="Mol. Gen. Genet.">
        <title>Strong homology between the small subunit of ribulose-1,5-bisphosphate carboxylase/oxygenase of two species of Acetabularia and the occurrence of unusual codon usage.</title>
        <authorList>
            <person name="Schneider S.U."/>
            <person name="Leible M.B."/>
            <person name="Yang X.P."/>
        </authorList>
    </citation>
    <scope>NUCLEOTIDE SEQUENCE [MRNA]</scope>
    <source>
        <strain>17</strain>
    </source>
</reference>
<name>RBS2_ACEAT</name>
<feature type="transit peptide" description="Chloroplast" evidence="1">
    <location>
        <begin position="1" status="less than"/>
        <end position="33"/>
    </location>
</feature>
<feature type="chain" id="PRO_0000031455" description="Ribulose bisphosphate carboxylase small subunit, chloroplastic 2">
    <location>
        <begin position="34"/>
        <end position="173"/>
    </location>
</feature>
<feature type="non-terminal residue">
    <location>
        <position position="1"/>
    </location>
</feature>
<accession>P16135</accession>
<comment type="function">
    <text evidence="2">RuBisCO catalyzes two reactions: the carboxylation of D-ribulose 1,5-bisphosphate, the primary event in carbon dioxide fixation, as well as the oxidative fragmentation of the pentose substrate. Both reactions occur simultaneously and in competition at the same active site. Although the small subunit is not catalytic it is essential for maximal activity.</text>
</comment>
<comment type="subunit">
    <text evidence="2">Heterohexadecamer of 8 large and 8 small subunits.</text>
</comment>
<comment type="subcellular location">
    <subcellularLocation>
        <location evidence="2">Plastid</location>
        <location evidence="2">Chloroplast</location>
    </subcellularLocation>
</comment>
<comment type="miscellaneous">
    <text evidence="2">The basic functional RuBisCO is composed of a large chain homodimer in a 'head-to-tail' conformation. In form I RuBisCO this homodimer is arranged in a barrel-like tetramer with the small subunits forming a tetrameric 'cap' on each end of the 'barrel'.</text>
</comment>
<comment type="similarity">
    <text evidence="2">Belongs to the RuBisCO small chain family.</text>
</comment>
<dbReference type="EMBL" id="X51812">
    <property type="protein sequence ID" value="CAA36109.1"/>
    <property type="molecule type" value="mRNA"/>
</dbReference>
<dbReference type="SMR" id="P16135"/>
<dbReference type="GO" id="GO:0009507">
    <property type="term" value="C:chloroplast"/>
    <property type="evidence" value="ECO:0007669"/>
    <property type="project" value="UniProtKB-SubCell"/>
</dbReference>
<dbReference type="GO" id="GO:0016829">
    <property type="term" value="F:lyase activity"/>
    <property type="evidence" value="ECO:0007669"/>
    <property type="project" value="UniProtKB-KW"/>
</dbReference>
<dbReference type="GO" id="GO:0004497">
    <property type="term" value="F:monooxygenase activity"/>
    <property type="evidence" value="ECO:0007669"/>
    <property type="project" value="UniProtKB-KW"/>
</dbReference>
<dbReference type="GO" id="GO:0009853">
    <property type="term" value="P:photorespiration"/>
    <property type="evidence" value="ECO:0007669"/>
    <property type="project" value="UniProtKB-KW"/>
</dbReference>
<dbReference type="GO" id="GO:0019253">
    <property type="term" value="P:reductive pentose-phosphate cycle"/>
    <property type="evidence" value="ECO:0007669"/>
    <property type="project" value="UniProtKB-KW"/>
</dbReference>
<dbReference type="CDD" id="cd03527">
    <property type="entry name" value="RuBisCO_small"/>
    <property type="match status" value="1"/>
</dbReference>
<dbReference type="FunFam" id="3.30.190.10:FF:000001">
    <property type="entry name" value="Ribulose bisphosphate carboxylase small chain, chloroplastic"/>
    <property type="match status" value="1"/>
</dbReference>
<dbReference type="Gene3D" id="3.30.190.10">
    <property type="entry name" value="Ribulose bisphosphate carboxylase, small subunit"/>
    <property type="match status" value="1"/>
</dbReference>
<dbReference type="HAMAP" id="MF_00859">
    <property type="entry name" value="RuBisCO_S_bact"/>
    <property type="match status" value="1"/>
</dbReference>
<dbReference type="InterPro" id="IPR024681">
    <property type="entry name" value="RuBisCO_ssu"/>
</dbReference>
<dbReference type="InterPro" id="IPR000894">
    <property type="entry name" value="RuBisCO_ssu_dom"/>
</dbReference>
<dbReference type="InterPro" id="IPR036385">
    <property type="entry name" value="RuBisCO_ssu_sf"/>
</dbReference>
<dbReference type="PANTHER" id="PTHR31262">
    <property type="entry name" value="RIBULOSE BISPHOSPHATE CARBOXYLASE SMALL CHAIN 1, CHLOROPLASTIC"/>
    <property type="match status" value="1"/>
</dbReference>
<dbReference type="PANTHER" id="PTHR31262:SF0">
    <property type="entry name" value="RIBULOSE BISPHOSPHATE CARBOXYLASE SMALL SUBUNIT, CHLOROPLASTIC 1"/>
    <property type="match status" value="1"/>
</dbReference>
<dbReference type="Pfam" id="PF00101">
    <property type="entry name" value="RuBisCO_small"/>
    <property type="match status" value="1"/>
</dbReference>
<dbReference type="PRINTS" id="PR00152">
    <property type="entry name" value="RUBISCOSMALL"/>
</dbReference>
<dbReference type="SMART" id="SM00961">
    <property type="entry name" value="RuBisCO_small"/>
    <property type="match status" value="1"/>
</dbReference>
<dbReference type="SUPFAM" id="SSF55239">
    <property type="entry name" value="RuBisCO, small subunit"/>
    <property type="match status" value="1"/>
</dbReference>
<keyword id="KW-0113">Calvin cycle</keyword>
<keyword id="KW-0120">Carbon dioxide fixation</keyword>
<keyword id="KW-0150">Chloroplast</keyword>
<keyword id="KW-0456">Lyase</keyword>
<keyword id="KW-0503">Monooxygenase</keyword>
<keyword id="KW-0560">Oxidoreductase</keyword>
<keyword id="KW-0601">Photorespiration</keyword>
<keyword id="KW-0602">Photosynthesis</keyword>
<keyword id="KW-0934">Plastid</keyword>
<keyword id="KW-0809">Transit peptide</keyword>
<organism>
    <name type="scientific">Acetabularia acetabulum</name>
    <name type="common">Mermaid's wine glass</name>
    <name type="synonym">Acetabularia mediterranea</name>
    <dbReference type="NCBI Taxonomy" id="35845"/>
    <lineage>
        <taxon>Eukaryota</taxon>
        <taxon>Viridiplantae</taxon>
        <taxon>Chlorophyta</taxon>
        <taxon>Ulvophyceae</taxon>
        <taxon>TCBD clade</taxon>
        <taxon>Dasycladales</taxon>
        <taxon>Polyphysaceae</taxon>
        <taxon>Acetabularia</taxon>
    </lineage>
</organism>
<evidence type="ECO:0000250" key="1"/>
<evidence type="ECO:0000255" key="2">
    <source>
        <dbReference type="HAMAP-Rule" id="MF_00860"/>
    </source>
</evidence>
<proteinExistence type="evidence at transcript level"/>
<gene>
    <name evidence="2" type="primary">RBCS2</name>
    <name type="synonym">RBCS-2</name>
</gene>
<protein>
    <recommendedName>
        <fullName evidence="2">Ribulose bisphosphate carboxylase small subunit, chloroplastic 2</fullName>
        <shortName evidence="2">RuBisCO small subunit 2</shortName>
    </recommendedName>
</protein>